<evidence type="ECO:0000255" key="1">
    <source>
        <dbReference type="HAMAP-Rule" id="MF_03156"/>
    </source>
</evidence>
<organism>
    <name type="scientific">Xenopus tropicalis</name>
    <name type="common">Western clawed frog</name>
    <name type="synonym">Silurana tropicalis</name>
    <dbReference type="NCBI Taxonomy" id="8364"/>
    <lineage>
        <taxon>Eukaryota</taxon>
        <taxon>Metazoa</taxon>
        <taxon>Chordata</taxon>
        <taxon>Craniata</taxon>
        <taxon>Vertebrata</taxon>
        <taxon>Euteleostomi</taxon>
        <taxon>Amphibia</taxon>
        <taxon>Batrachia</taxon>
        <taxon>Anura</taxon>
        <taxon>Pipoidea</taxon>
        <taxon>Pipidae</taxon>
        <taxon>Xenopodinae</taxon>
        <taxon>Xenopus</taxon>
        <taxon>Silurana</taxon>
    </lineage>
</organism>
<reference key="1">
    <citation type="journal article" date="2010" name="Science">
        <title>The genome of the Western clawed frog Xenopus tropicalis.</title>
        <authorList>
            <person name="Hellsten U."/>
            <person name="Harland R.M."/>
            <person name="Gilchrist M.J."/>
            <person name="Hendrix D."/>
            <person name="Jurka J."/>
            <person name="Kapitonov V."/>
            <person name="Ovcharenko I."/>
            <person name="Putnam N.H."/>
            <person name="Shu S."/>
            <person name="Taher L."/>
            <person name="Blitz I.L."/>
            <person name="Blumberg B."/>
            <person name="Dichmann D.S."/>
            <person name="Dubchak I."/>
            <person name="Amaya E."/>
            <person name="Detter J.C."/>
            <person name="Fletcher R."/>
            <person name="Gerhard D.S."/>
            <person name="Goodstein D."/>
            <person name="Graves T."/>
            <person name="Grigoriev I.V."/>
            <person name="Grimwood J."/>
            <person name="Kawashima T."/>
            <person name="Lindquist E."/>
            <person name="Lucas S.M."/>
            <person name="Mead P.E."/>
            <person name="Mitros T."/>
            <person name="Ogino H."/>
            <person name="Ohta Y."/>
            <person name="Poliakov A.V."/>
            <person name="Pollet N."/>
            <person name="Robert J."/>
            <person name="Salamov A."/>
            <person name="Sater A.K."/>
            <person name="Schmutz J."/>
            <person name="Terry A."/>
            <person name="Vize P.D."/>
            <person name="Warren W.C."/>
            <person name="Wells D."/>
            <person name="Wills A."/>
            <person name="Wilson R.K."/>
            <person name="Zimmerman L.B."/>
            <person name="Zorn A.M."/>
            <person name="Grainger R."/>
            <person name="Grammer T."/>
            <person name="Khokha M.K."/>
            <person name="Richardson P.M."/>
            <person name="Rokhsar D.S."/>
        </authorList>
    </citation>
    <scope>NUCLEOTIDE SEQUENCE [LARGE SCALE GENOMIC DNA]</scope>
</reference>
<comment type="function">
    <text evidence="1">Catalyzes the conversion of inosine 5'-phosphate (IMP) to xanthosine 5'-phosphate (XMP), the first committed and rate-limiting step in the de novo synthesis of guanine nucleotides, and therefore plays an important role in the regulation of cell growth.</text>
</comment>
<comment type="catalytic activity">
    <reaction evidence="1">
        <text>IMP + NAD(+) + H2O = XMP + NADH + H(+)</text>
        <dbReference type="Rhea" id="RHEA:11708"/>
        <dbReference type="ChEBI" id="CHEBI:15377"/>
        <dbReference type="ChEBI" id="CHEBI:15378"/>
        <dbReference type="ChEBI" id="CHEBI:57464"/>
        <dbReference type="ChEBI" id="CHEBI:57540"/>
        <dbReference type="ChEBI" id="CHEBI:57945"/>
        <dbReference type="ChEBI" id="CHEBI:58053"/>
        <dbReference type="EC" id="1.1.1.205"/>
    </reaction>
</comment>
<comment type="cofactor">
    <cofactor evidence="1">
        <name>K(+)</name>
        <dbReference type="ChEBI" id="CHEBI:29103"/>
    </cofactor>
</comment>
<comment type="activity regulation">
    <text evidence="1">Mycophenolic acid (MPA) is a non-competitive inhibitor that prevents formation of the closed enzyme conformation by binding to the same site as the amobile flap. In contrast, mizoribine monophosphate (MZP) is a competitive inhibitor that induces the closed conformation. MPA is a potent inhibitor of mammalian IMPDHs but a poor inhibitor of the bacterial enzymes. MZP is a more potent inhibitor of bacterial IMPDH.</text>
</comment>
<comment type="pathway">
    <text evidence="1">Purine metabolism; XMP biosynthesis via de novo pathway; XMP from IMP: step 1/1.</text>
</comment>
<comment type="subunit">
    <text evidence="1">Homotetramer.</text>
</comment>
<comment type="subcellular location">
    <subcellularLocation>
        <location evidence="1">Cytoplasm</location>
    </subcellularLocation>
    <subcellularLocation>
        <location evidence="1">Nucleus</location>
    </subcellularLocation>
</comment>
<comment type="similarity">
    <text evidence="1">Belongs to the IMPDH/GMPR family.</text>
</comment>
<sequence>MADYLISGGTGYVPEDGLTAQHLFANSDGLTYNDFLILPGFIDFTADEVDLTSALTRKITLKTPLISSPMDTVTESDMAIAMALMGGIGIIHHNCTPEFQANEVRKKFEQGFITDPVVMSLNHTVGDVFEAKNRHGFSGIPVTETGKMGSKLVGIVTSRDIDFLTEKDYSTYLSEVMTKRDELVVAPAGVTLKEANEILQRSKKGKLPIVNDSDELVAIIARTDLKKNRDYPLASKDCRKQLLCGAAIGTREDDKYRLDLLTQAGVDVVVLDSSQGNSVYQINMIHYIKQKYPELQVVGGNVVTAAQAKNLIDAGVDALRVGMGCGSICITQEVMACGRPQGTAVYKVAEYARRFGVPVIADGGIQTVGHVVKALALGASTVMMGSLLAATTEAPGEYFFSDGVRLKKYRGMGSLDAMEKNTSSQKRYFSEGDKVKVAQGVSGSIQDKGSIHKFVPYLIAGIQHGCQDIGAKSLSILRSMMYSGELKLEKRTMSAQVEGGVHGLHSYEKRLY</sequence>
<keyword id="KW-0129">CBS domain</keyword>
<keyword id="KW-0963">Cytoplasm</keyword>
<keyword id="KW-0332">GMP biosynthesis</keyword>
<keyword id="KW-0479">Metal-binding</keyword>
<keyword id="KW-0520">NAD</keyword>
<keyword id="KW-0539">Nucleus</keyword>
<keyword id="KW-0560">Oxidoreductase</keyword>
<keyword id="KW-0630">Potassium</keyword>
<keyword id="KW-0658">Purine biosynthesis</keyword>
<keyword id="KW-1185">Reference proteome</keyword>
<keyword id="KW-0677">Repeat</keyword>
<feature type="chain" id="PRO_0000415678" description="Inosine-5'-monophosphate dehydrogenase 1">
    <location>
        <begin position="1"/>
        <end position="512"/>
    </location>
</feature>
<feature type="domain" description="CBS 1" evidence="1">
    <location>
        <begin position="112"/>
        <end position="171"/>
    </location>
</feature>
<feature type="domain" description="CBS 2" evidence="1">
    <location>
        <begin position="177"/>
        <end position="235"/>
    </location>
</feature>
<feature type="active site" description="Thioimidate intermediate" evidence="1">
    <location>
        <position position="329"/>
    </location>
</feature>
<feature type="active site" description="Proton acceptor" evidence="1">
    <location>
        <position position="427"/>
    </location>
</feature>
<feature type="binding site" evidence="1">
    <location>
        <begin position="272"/>
        <end position="274"/>
    </location>
    <ligand>
        <name>NAD(+)</name>
        <dbReference type="ChEBI" id="CHEBI:57540"/>
    </ligand>
</feature>
<feature type="binding site" evidence="1">
    <location>
        <begin position="322"/>
        <end position="324"/>
    </location>
    <ligand>
        <name>NAD(+)</name>
        <dbReference type="ChEBI" id="CHEBI:57540"/>
    </ligand>
</feature>
<feature type="binding site" description="in other chain" evidence="1">
    <location>
        <position position="324"/>
    </location>
    <ligand>
        <name>K(+)</name>
        <dbReference type="ChEBI" id="CHEBI:29103"/>
        <note>ligand shared between two tetrameric partners</note>
    </ligand>
</feature>
<feature type="binding site" description="in other chain" evidence="1">
    <location>
        <position position="326"/>
    </location>
    <ligand>
        <name>K(+)</name>
        <dbReference type="ChEBI" id="CHEBI:29103"/>
        <note>ligand shared between two tetrameric partners</note>
    </ligand>
</feature>
<feature type="binding site" evidence="1">
    <location>
        <position position="327"/>
    </location>
    <ligand>
        <name>IMP</name>
        <dbReference type="ChEBI" id="CHEBI:58053"/>
    </ligand>
</feature>
<feature type="binding site" description="in other chain" evidence="1">
    <location>
        <position position="329"/>
    </location>
    <ligand>
        <name>K(+)</name>
        <dbReference type="ChEBI" id="CHEBI:29103"/>
        <note>ligand shared between two tetrameric partners</note>
    </ligand>
</feature>
<feature type="binding site" evidence="1">
    <location>
        <begin position="362"/>
        <end position="364"/>
    </location>
    <ligand>
        <name>IMP</name>
        <dbReference type="ChEBI" id="CHEBI:58053"/>
    </ligand>
</feature>
<feature type="binding site" evidence="1">
    <location>
        <begin position="385"/>
        <end position="386"/>
    </location>
    <ligand>
        <name>IMP</name>
        <dbReference type="ChEBI" id="CHEBI:58053"/>
    </ligand>
</feature>
<feature type="binding site" evidence="1">
    <location>
        <begin position="409"/>
        <end position="413"/>
    </location>
    <ligand>
        <name>IMP</name>
        <dbReference type="ChEBI" id="CHEBI:58053"/>
    </ligand>
</feature>
<feature type="binding site" evidence="1">
    <location>
        <position position="439"/>
    </location>
    <ligand>
        <name>IMP</name>
        <dbReference type="ChEBI" id="CHEBI:58053"/>
    </ligand>
</feature>
<feature type="binding site" evidence="1">
    <location>
        <position position="498"/>
    </location>
    <ligand>
        <name>K(+)</name>
        <dbReference type="ChEBI" id="CHEBI:29103"/>
        <note>ligand shared between two tetrameric partners</note>
    </ligand>
</feature>
<feature type="binding site" evidence="1">
    <location>
        <position position="499"/>
    </location>
    <ligand>
        <name>K(+)</name>
        <dbReference type="ChEBI" id="CHEBI:29103"/>
        <note>ligand shared between two tetrameric partners</note>
    </ligand>
</feature>
<feature type="binding site" evidence="1">
    <location>
        <position position="500"/>
    </location>
    <ligand>
        <name>K(+)</name>
        <dbReference type="ChEBI" id="CHEBI:29103"/>
        <note>ligand shared between two tetrameric partners</note>
    </ligand>
</feature>
<protein>
    <recommendedName>
        <fullName evidence="1">Inosine-5'-monophosphate dehydrogenase 1</fullName>
        <shortName evidence="1">IMP dehydrogenase 1</shortName>
        <shortName evidence="1">IMPD 1</shortName>
        <shortName evidence="1">IMPDH 1</shortName>
        <ecNumber evidence="1">1.1.1.205</ecNumber>
    </recommendedName>
</protein>
<dbReference type="EC" id="1.1.1.205" evidence="1"/>
<dbReference type="EMBL" id="AAMC01092195">
    <property type="status" value="NOT_ANNOTATED_CDS"/>
    <property type="molecule type" value="Genomic_DNA"/>
</dbReference>
<dbReference type="EMBL" id="AAMC01092196">
    <property type="status" value="NOT_ANNOTATED_CDS"/>
    <property type="molecule type" value="Genomic_DNA"/>
</dbReference>
<dbReference type="SMR" id="F6S675"/>
<dbReference type="FunCoup" id="F6S675">
    <property type="interactions" value="940"/>
</dbReference>
<dbReference type="STRING" id="8364.ENSXETP00000010049"/>
<dbReference type="PaxDb" id="8364-ENSXETP00000049823"/>
<dbReference type="eggNOG" id="KOG2550">
    <property type="taxonomic scope" value="Eukaryota"/>
</dbReference>
<dbReference type="HOGENOM" id="CLU_022552_2_1_1"/>
<dbReference type="InParanoid" id="F6S675"/>
<dbReference type="UniPathway" id="UPA00601">
    <property type="reaction ID" value="UER00295"/>
</dbReference>
<dbReference type="Proteomes" id="UP000008143">
    <property type="component" value="Unplaced"/>
</dbReference>
<dbReference type="GO" id="GO:0005737">
    <property type="term" value="C:cytoplasm"/>
    <property type="evidence" value="ECO:0007669"/>
    <property type="project" value="UniProtKB-SubCell"/>
</dbReference>
<dbReference type="GO" id="GO:0005634">
    <property type="term" value="C:nucleus"/>
    <property type="evidence" value="ECO:0007669"/>
    <property type="project" value="UniProtKB-SubCell"/>
</dbReference>
<dbReference type="GO" id="GO:0003938">
    <property type="term" value="F:IMP dehydrogenase activity"/>
    <property type="evidence" value="ECO:0007669"/>
    <property type="project" value="UniProtKB-UniRule"/>
</dbReference>
<dbReference type="GO" id="GO:0046872">
    <property type="term" value="F:metal ion binding"/>
    <property type="evidence" value="ECO:0007669"/>
    <property type="project" value="UniProtKB-UniRule"/>
</dbReference>
<dbReference type="GO" id="GO:0000166">
    <property type="term" value="F:nucleotide binding"/>
    <property type="evidence" value="ECO:0007669"/>
    <property type="project" value="UniProtKB-UniRule"/>
</dbReference>
<dbReference type="GO" id="GO:0006177">
    <property type="term" value="P:GMP biosynthetic process"/>
    <property type="evidence" value="ECO:0007669"/>
    <property type="project" value="UniProtKB-UniRule"/>
</dbReference>
<dbReference type="CDD" id="cd04601">
    <property type="entry name" value="CBS_pair_IMPDH"/>
    <property type="match status" value="1"/>
</dbReference>
<dbReference type="CDD" id="cd00381">
    <property type="entry name" value="IMPDH"/>
    <property type="match status" value="1"/>
</dbReference>
<dbReference type="FunFam" id="3.20.20.70:FF:000007">
    <property type="entry name" value="Chromosome 19 SCAF14664, whole genome shotgun sequence"/>
    <property type="match status" value="1"/>
</dbReference>
<dbReference type="Gene3D" id="3.20.20.70">
    <property type="entry name" value="Aldolase class I"/>
    <property type="match status" value="1"/>
</dbReference>
<dbReference type="HAMAP" id="MF_01964">
    <property type="entry name" value="IMPDH"/>
    <property type="match status" value="1"/>
</dbReference>
<dbReference type="InterPro" id="IPR013785">
    <property type="entry name" value="Aldolase_TIM"/>
</dbReference>
<dbReference type="InterPro" id="IPR000644">
    <property type="entry name" value="CBS_dom"/>
</dbReference>
<dbReference type="InterPro" id="IPR005990">
    <property type="entry name" value="IMP_DH"/>
</dbReference>
<dbReference type="InterPro" id="IPR015875">
    <property type="entry name" value="IMP_DH/GMP_Rdtase_CS"/>
</dbReference>
<dbReference type="InterPro" id="IPR001093">
    <property type="entry name" value="IMP_DH_GMPRt"/>
</dbReference>
<dbReference type="NCBIfam" id="TIGR01302">
    <property type="entry name" value="IMP_dehydrog"/>
    <property type="match status" value="1"/>
</dbReference>
<dbReference type="PANTHER" id="PTHR11911:SF74">
    <property type="entry name" value="INOSINE-5'-MONOPHOSPHATE DEHYDROGENASE 1"/>
    <property type="match status" value="1"/>
</dbReference>
<dbReference type="PANTHER" id="PTHR11911">
    <property type="entry name" value="INOSINE-5-MONOPHOSPHATE DEHYDROGENASE RELATED"/>
    <property type="match status" value="1"/>
</dbReference>
<dbReference type="Pfam" id="PF00571">
    <property type="entry name" value="CBS"/>
    <property type="match status" value="2"/>
</dbReference>
<dbReference type="Pfam" id="PF00478">
    <property type="entry name" value="IMPDH"/>
    <property type="match status" value="1"/>
</dbReference>
<dbReference type="PIRSF" id="PIRSF000130">
    <property type="entry name" value="IMPDH"/>
    <property type="match status" value="1"/>
</dbReference>
<dbReference type="SMART" id="SM00116">
    <property type="entry name" value="CBS"/>
    <property type="match status" value="2"/>
</dbReference>
<dbReference type="SMART" id="SM01240">
    <property type="entry name" value="IMPDH"/>
    <property type="match status" value="1"/>
</dbReference>
<dbReference type="SUPFAM" id="SSF51412">
    <property type="entry name" value="Inosine monophosphate dehydrogenase (IMPDH)"/>
    <property type="match status" value="2"/>
</dbReference>
<dbReference type="PROSITE" id="PS51371">
    <property type="entry name" value="CBS"/>
    <property type="match status" value="2"/>
</dbReference>
<dbReference type="PROSITE" id="PS00487">
    <property type="entry name" value="IMP_DH_GMP_RED"/>
    <property type="match status" value="1"/>
</dbReference>
<gene>
    <name type="primary">impdh1</name>
</gene>
<accession>F6S675</accession>
<proteinExistence type="inferred from homology"/>
<name>IMDH1_XENTR</name>